<keyword id="KW-0037">Angiogenesis</keyword>
<keyword id="KW-0130">Cell adhesion</keyword>
<keyword id="KW-0968">Cytoplasmic vesicle</keyword>
<keyword id="KW-1015">Disulfide bond</keyword>
<keyword id="KW-0245">EGF-like domain</keyword>
<keyword id="KW-0278">Fertilization</keyword>
<keyword id="KW-0325">Glycoprotein</keyword>
<keyword id="KW-0472">Membrane</keyword>
<keyword id="KW-1185">Reference proteome</keyword>
<keyword id="KW-0677">Repeat</keyword>
<keyword id="KW-0964">Secreted</keyword>
<keyword id="KW-0732">Signal</keyword>
<comment type="function">
    <text evidence="1">Contributes to phagocytic removal of apoptotic cells in many tissues. Plays an important role in the maintenance of intestinal epithelial homeostasis and the promotion of mucosal healing. Promotes VEGF-dependent neovascularization (By similarity). Specific ligand for the alpha-v/beta-3 and alpha-v/beta-5 receptors. Also binds to phosphatidylserine-enriched cell surfaces in a receptor-independent manner. Zona pellucida-binding protein which may play a role in gamete interaction. Appears to participate in the O-acetylation of GD3 ganglioside sialic acid.</text>
</comment>
<comment type="subcellular location">
    <subcellularLocation>
        <location evidence="2">Membrane</location>
        <topology evidence="2">Peripheral membrane protein</topology>
    </subcellularLocation>
    <subcellularLocation>
        <location evidence="2">Secreted</location>
    </subcellularLocation>
    <subcellularLocation>
        <location evidence="2">Cytoplasmic vesicle</location>
        <location evidence="2">Secretory vesicle</location>
        <location evidence="2">Acrosome membrane</location>
        <topology evidence="2">Peripheral membrane protein</topology>
    </subcellularLocation>
    <text evidence="2">Located in the acrosomal region of zona-pellucida bound sperm.</text>
</comment>
<comment type="tissue specificity">
    <text>Spleen, lung, heart, brain and muscle.</text>
</comment>
<comment type="domain">
    <text evidence="1">The F5/8 type C 2 domain mediates high-affinity binding to phosphatidylserine-containing membranes.</text>
</comment>
<reference key="1">
    <citation type="journal article" date="1996" name="Biochem. Biophys. Res. Commun.">
        <title>Cloning and expression of cDNA for O-acetylation of GD3 ganglioside.</title>
        <authorList>
            <person name="Ogura K."/>
            <person name="Nara K."/>
            <person name="Watanabe Y."/>
            <person name="Kohno K."/>
            <person name="Tai T."/>
            <person name="Sanai Y."/>
        </authorList>
    </citation>
    <scope>NUCLEOTIDE SEQUENCE [MRNA]</scope>
    <source>
        <tissue>Brain</tissue>
    </source>
</reference>
<reference key="2">
    <citation type="journal article" date="2004" name="Genome Res.">
        <title>The status, quality, and expansion of the NIH full-length cDNA project: the Mammalian Gene Collection (MGC).</title>
        <authorList>
            <consortium name="The MGC Project Team"/>
        </authorList>
    </citation>
    <scope>NUCLEOTIDE SEQUENCE [LARGE SCALE MRNA]</scope>
    <source>
        <tissue>Heart</tissue>
    </source>
</reference>
<name>MFGM_RAT</name>
<sequence length="427" mass="47413">MQFSRVLAALCGVLLCASGLFAASGDFCDSSLCLNGGTCLMGQDNDIYCLCPEGFTGLVCNETEKGPCSPNPCFHDAKCLVTEDTQRGDIFTEYICQCPVGYSGIHCELGCSTKLGLEGGAIADSQISASSVYMGFMGLQRWGPELARLYRTGIVNAWTASSYDSKPWIQVDFLRKMRVSGVMTQGASRAGRAEYLKTFKVAYSLDGRRFEFIQDESGTGDKEFMGNQDNNSLKINMFNPTLEAQYIRLYPVSCHRGCTLRFELLGCELHGCSEPLGLKNNTIPDSQITASSSYKTWNLRAFGWYPHLGRLDNQGKINAWTAQSNSAKEWLQVDLGTQKKVTGIITQGARDFGHIQYVASYKVAHSDDGVQWTVYEEQGTSKVFQGNLDNNSHKKNIFEKPFMARYVRVLPLSWHNRITLRLELLGC</sequence>
<gene>
    <name type="primary">Mfge8</name>
    <name type="synonym">Ags</name>
</gene>
<protein>
    <recommendedName>
        <fullName>Lactadherin</fullName>
    </recommendedName>
    <alternativeName>
        <fullName>MFGM</fullName>
    </alternativeName>
    <alternativeName>
        <fullName>Milk fat globule-EGF factor 8</fullName>
        <shortName>MFG-E8</shortName>
    </alternativeName>
    <alternativeName>
        <fullName>O-acetyl GD3 ganglioside synthase</fullName>
        <shortName>AGS</shortName>
    </alternativeName>
    <alternativeName>
        <fullName>SED1</fullName>
    </alternativeName>
</protein>
<feature type="signal peptide" evidence="3">
    <location>
        <begin position="1"/>
        <end position="22"/>
    </location>
</feature>
<feature type="chain" id="PRO_0000007654" description="Lactadherin">
    <location>
        <begin position="23"/>
        <end position="427"/>
    </location>
</feature>
<feature type="domain" description="EGF-like 1" evidence="4">
    <location>
        <begin position="24"/>
        <end position="61"/>
    </location>
</feature>
<feature type="domain" description="EGF-like 2" evidence="4">
    <location>
        <begin position="64"/>
        <end position="108"/>
    </location>
</feature>
<feature type="domain" description="F5/8 type C 1" evidence="5">
    <location>
        <begin position="111"/>
        <end position="267"/>
    </location>
</feature>
<feature type="domain" description="F5/8 type C 2" evidence="5">
    <location>
        <begin position="272"/>
        <end position="427"/>
    </location>
</feature>
<feature type="short sequence motif" description="Cell attachment site">
    <location>
        <begin position="87"/>
        <end position="89"/>
    </location>
</feature>
<feature type="glycosylation site" description="N-linked (GlcNAc...) asparagine" evidence="3">
    <location>
        <position position="61"/>
    </location>
</feature>
<feature type="glycosylation site" description="N-linked (GlcNAc...) asparagine" evidence="3">
    <location>
        <position position="230"/>
    </location>
</feature>
<feature type="glycosylation site" description="N-linked (GlcNAc...) asparagine" evidence="3">
    <location>
        <position position="280"/>
    </location>
</feature>
<feature type="glycosylation site" description="N-linked (GlcNAc...) asparagine" evidence="3">
    <location>
        <position position="390"/>
    </location>
</feature>
<feature type="disulfide bond" evidence="1">
    <location>
        <begin position="28"/>
        <end position="39"/>
    </location>
</feature>
<feature type="disulfide bond" evidence="1">
    <location>
        <begin position="33"/>
        <end position="49"/>
    </location>
</feature>
<feature type="disulfide bond" evidence="1">
    <location>
        <begin position="51"/>
        <end position="60"/>
    </location>
</feature>
<feature type="disulfide bond" evidence="1">
    <location>
        <begin position="68"/>
        <end position="79"/>
    </location>
</feature>
<feature type="disulfide bond" evidence="1">
    <location>
        <begin position="73"/>
        <end position="96"/>
    </location>
</feature>
<feature type="disulfide bond" evidence="1">
    <location>
        <begin position="98"/>
        <end position="107"/>
    </location>
</feature>
<feature type="disulfide bond" evidence="1">
    <location>
        <begin position="111"/>
        <end position="267"/>
    </location>
</feature>
<feature type="disulfide bond" evidence="1">
    <location>
        <begin position="254"/>
        <end position="258"/>
    </location>
</feature>
<feature type="disulfide bond" evidence="1">
    <location>
        <begin position="272"/>
        <end position="427"/>
    </location>
</feature>
<proteinExistence type="evidence at transcript level"/>
<accession>P70490</accession>
<dbReference type="EMBL" id="D84068">
    <property type="protein sequence ID" value="BAA12210.1"/>
    <property type="molecule type" value="mRNA"/>
</dbReference>
<dbReference type="EMBL" id="BC085754">
    <property type="protein sequence ID" value="AAH85754.1"/>
    <property type="molecule type" value="mRNA"/>
</dbReference>
<dbReference type="PIR" id="JC4915">
    <property type="entry name" value="JC4915"/>
</dbReference>
<dbReference type="RefSeq" id="NP_001035276.1">
    <property type="nucleotide sequence ID" value="NM_001040186.2"/>
</dbReference>
<dbReference type="RefSeq" id="NP_036943.1">
    <property type="nucleotide sequence ID" value="NM_012811.3"/>
</dbReference>
<dbReference type="SMR" id="P70490"/>
<dbReference type="BioGRID" id="247317">
    <property type="interactions" value="1"/>
</dbReference>
<dbReference type="FunCoup" id="P70490">
    <property type="interactions" value="403"/>
</dbReference>
<dbReference type="IntAct" id="P70490">
    <property type="interactions" value="2"/>
</dbReference>
<dbReference type="STRING" id="10116.ENSRNOP00000060643"/>
<dbReference type="GlyCosmos" id="P70490">
    <property type="glycosylation" value="4 sites, No reported glycans"/>
</dbReference>
<dbReference type="GlyGen" id="P70490">
    <property type="glycosylation" value="4 sites"/>
</dbReference>
<dbReference type="PhosphoSitePlus" id="P70490"/>
<dbReference type="GeneID" id="25277"/>
<dbReference type="KEGG" id="rno:25277"/>
<dbReference type="UCSC" id="RGD:3083">
    <property type="organism name" value="rat"/>
</dbReference>
<dbReference type="AGR" id="RGD:3083"/>
<dbReference type="CTD" id="4240"/>
<dbReference type="RGD" id="3083">
    <property type="gene designation" value="Mfge8"/>
</dbReference>
<dbReference type="VEuPathDB" id="HostDB:ENSRNOG00000022321"/>
<dbReference type="HOGENOM" id="CLU_030066_0_1_1"/>
<dbReference type="InParanoid" id="P70490"/>
<dbReference type="OrthoDB" id="2121828at2759"/>
<dbReference type="Reactome" id="R-RNO-381426">
    <property type="pathway name" value="Regulation of Insulin-like Growth Factor (IGF) transport and uptake by Insulin-like Growth Factor Binding Proteins (IGFBPs)"/>
</dbReference>
<dbReference type="Reactome" id="R-RNO-8957275">
    <property type="pathway name" value="Post-translational protein phosphorylation"/>
</dbReference>
<dbReference type="PRO" id="PR:P70490"/>
<dbReference type="Proteomes" id="UP000002494">
    <property type="component" value="Chromosome 1"/>
</dbReference>
<dbReference type="Bgee" id="ENSRNOG00000017510">
    <property type="expression patterns" value="Expressed in spleen and 19 other cell types or tissues"/>
</dbReference>
<dbReference type="ExpressionAtlas" id="P70490">
    <property type="expression patterns" value="baseline and differential"/>
</dbReference>
<dbReference type="GO" id="GO:0002080">
    <property type="term" value="C:acrosomal membrane"/>
    <property type="evidence" value="ECO:0007669"/>
    <property type="project" value="UniProtKB-SubCell"/>
</dbReference>
<dbReference type="GO" id="GO:0009897">
    <property type="term" value="C:external side of plasma membrane"/>
    <property type="evidence" value="ECO:0000266"/>
    <property type="project" value="RGD"/>
</dbReference>
<dbReference type="GO" id="GO:0005615">
    <property type="term" value="C:extracellular space"/>
    <property type="evidence" value="ECO:0000266"/>
    <property type="project" value="RGD"/>
</dbReference>
<dbReference type="GO" id="GO:0005178">
    <property type="term" value="F:integrin binding"/>
    <property type="evidence" value="ECO:0000266"/>
    <property type="project" value="RGD"/>
</dbReference>
<dbReference type="GO" id="GO:0001786">
    <property type="term" value="F:phosphatidylserine binding"/>
    <property type="evidence" value="ECO:0000266"/>
    <property type="project" value="RGD"/>
</dbReference>
<dbReference type="GO" id="GO:0001525">
    <property type="term" value="P:angiogenesis"/>
    <property type="evidence" value="ECO:0007669"/>
    <property type="project" value="UniProtKB-KW"/>
</dbReference>
<dbReference type="GO" id="GO:0043277">
    <property type="term" value="P:apoptotic cell clearance"/>
    <property type="evidence" value="ECO:0000266"/>
    <property type="project" value="RGD"/>
</dbReference>
<dbReference type="GO" id="GO:0007155">
    <property type="term" value="P:cell adhesion"/>
    <property type="evidence" value="ECO:0007669"/>
    <property type="project" value="UniProtKB-KW"/>
</dbReference>
<dbReference type="GO" id="GO:0008284">
    <property type="term" value="P:positive regulation of cell population proliferation"/>
    <property type="evidence" value="ECO:0000270"/>
    <property type="project" value="RGD"/>
</dbReference>
<dbReference type="GO" id="GO:0043627">
    <property type="term" value="P:response to estrogen"/>
    <property type="evidence" value="ECO:0000270"/>
    <property type="project" value="RGD"/>
</dbReference>
<dbReference type="GO" id="GO:0007338">
    <property type="term" value="P:single fertilization"/>
    <property type="evidence" value="ECO:0007669"/>
    <property type="project" value="UniProtKB-KW"/>
</dbReference>
<dbReference type="CDD" id="cd00054">
    <property type="entry name" value="EGF_CA"/>
    <property type="match status" value="2"/>
</dbReference>
<dbReference type="CDD" id="cd00057">
    <property type="entry name" value="FA58C"/>
    <property type="match status" value="2"/>
</dbReference>
<dbReference type="FunFam" id="2.60.120.260:FF:000002">
    <property type="entry name" value="Coagulation factor VIII"/>
    <property type="match status" value="2"/>
</dbReference>
<dbReference type="FunFam" id="2.10.25.10:FF:000767">
    <property type="entry name" value="Vasorin a"/>
    <property type="match status" value="1"/>
</dbReference>
<dbReference type="Gene3D" id="2.60.120.260">
    <property type="entry name" value="Galactose-binding domain-like"/>
    <property type="match status" value="2"/>
</dbReference>
<dbReference type="Gene3D" id="2.10.25.10">
    <property type="entry name" value="Laminin"/>
    <property type="match status" value="2"/>
</dbReference>
<dbReference type="InterPro" id="IPR000742">
    <property type="entry name" value="EGF-like_dom"/>
</dbReference>
<dbReference type="InterPro" id="IPR000421">
    <property type="entry name" value="FA58C"/>
</dbReference>
<dbReference type="InterPro" id="IPR008979">
    <property type="entry name" value="Galactose-bd-like_sf"/>
</dbReference>
<dbReference type="InterPro" id="IPR050633">
    <property type="entry name" value="Neuropilin_MCO_CoagFactor"/>
</dbReference>
<dbReference type="PANTHER" id="PTHR46806">
    <property type="entry name" value="F5/8 TYPE C DOMAIN-CONTAINING PROTEIN"/>
    <property type="match status" value="1"/>
</dbReference>
<dbReference type="PANTHER" id="PTHR46806:SF5">
    <property type="entry name" value="F5_8 TYPE C DOMAIN-CONTAINING PROTEIN"/>
    <property type="match status" value="1"/>
</dbReference>
<dbReference type="Pfam" id="PF00008">
    <property type="entry name" value="EGF"/>
    <property type="match status" value="2"/>
</dbReference>
<dbReference type="Pfam" id="PF00754">
    <property type="entry name" value="F5_F8_type_C"/>
    <property type="match status" value="2"/>
</dbReference>
<dbReference type="SMART" id="SM00181">
    <property type="entry name" value="EGF"/>
    <property type="match status" value="2"/>
</dbReference>
<dbReference type="SMART" id="SM00231">
    <property type="entry name" value="FA58C"/>
    <property type="match status" value="2"/>
</dbReference>
<dbReference type="SUPFAM" id="SSF57196">
    <property type="entry name" value="EGF/Laminin"/>
    <property type="match status" value="2"/>
</dbReference>
<dbReference type="SUPFAM" id="SSF49785">
    <property type="entry name" value="Galactose-binding domain-like"/>
    <property type="match status" value="2"/>
</dbReference>
<dbReference type="PROSITE" id="PS00022">
    <property type="entry name" value="EGF_1"/>
    <property type="match status" value="2"/>
</dbReference>
<dbReference type="PROSITE" id="PS01186">
    <property type="entry name" value="EGF_2"/>
    <property type="match status" value="2"/>
</dbReference>
<dbReference type="PROSITE" id="PS50026">
    <property type="entry name" value="EGF_3"/>
    <property type="match status" value="2"/>
</dbReference>
<dbReference type="PROSITE" id="PS01285">
    <property type="entry name" value="FA58C_1"/>
    <property type="match status" value="2"/>
</dbReference>
<dbReference type="PROSITE" id="PS01286">
    <property type="entry name" value="FA58C_2"/>
    <property type="match status" value="2"/>
</dbReference>
<dbReference type="PROSITE" id="PS50022">
    <property type="entry name" value="FA58C_3"/>
    <property type="match status" value="2"/>
</dbReference>
<evidence type="ECO:0000250" key="1"/>
<evidence type="ECO:0000250" key="2">
    <source>
        <dbReference type="UniProtKB" id="P79385"/>
    </source>
</evidence>
<evidence type="ECO:0000255" key="3"/>
<evidence type="ECO:0000255" key="4">
    <source>
        <dbReference type="PROSITE-ProRule" id="PRU00076"/>
    </source>
</evidence>
<evidence type="ECO:0000255" key="5">
    <source>
        <dbReference type="PROSITE-ProRule" id="PRU00081"/>
    </source>
</evidence>
<organism>
    <name type="scientific">Rattus norvegicus</name>
    <name type="common">Rat</name>
    <dbReference type="NCBI Taxonomy" id="10116"/>
    <lineage>
        <taxon>Eukaryota</taxon>
        <taxon>Metazoa</taxon>
        <taxon>Chordata</taxon>
        <taxon>Craniata</taxon>
        <taxon>Vertebrata</taxon>
        <taxon>Euteleostomi</taxon>
        <taxon>Mammalia</taxon>
        <taxon>Eutheria</taxon>
        <taxon>Euarchontoglires</taxon>
        <taxon>Glires</taxon>
        <taxon>Rodentia</taxon>
        <taxon>Myomorpha</taxon>
        <taxon>Muroidea</taxon>
        <taxon>Muridae</taxon>
        <taxon>Murinae</taxon>
        <taxon>Rattus</taxon>
    </lineage>
</organism>